<evidence type="ECO:0000255" key="1">
    <source>
        <dbReference type="HAMAP-Rule" id="MF_00367"/>
    </source>
</evidence>
<evidence type="ECO:0000255" key="2">
    <source>
        <dbReference type="PROSITE-ProRule" id="PRU01050"/>
    </source>
</evidence>
<sequence>MTFKSGFVAILGRPNVGKSTFLNHVMGQKIAIMSDKAQTTRNKIMGIYTTDKEQIVFIDTPGIHKPKTALGDFMVESAYSTLREVDTVLFMVPADEARGKGDDMIIERLKAAKVPVILVVNKIDKVHPDQLLSQIDDFRNQMDFKEIVPISALQGNNVSRLVDILSENLDEGFQYFPSDQITDHPERFLVSEMVREKVLHLTREEIPHSVAVVVDSMKRDEETDKVHIRATIMVERDSQKGIIIGKGGAMLKKIGSMARRDIELMLGDKVFLETWVKVKKNWRDKKLDLADFGYNEREY</sequence>
<proteinExistence type="inferred from homology"/>
<dbReference type="EMBL" id="AE005672">
    <property type="protein sequence ID" value="AAK75090.1"/>
    <property type="molecule type" value="Genomic_DNA"/>
</dbReference>
<dbReference type="PIR" id="A95112">
    <property type="entry name" value="A95112"/>
</dbReference>
<dbReference type="RefSeq" id="WP_000143265.1">
    <property type="nucleotide sequence ID" value="NZ_CP155539.1"/>
</dbReference>
<dbReference type="SMR" id="P0A3C3"/>
<dbReference type="PaxDb" id="170187-SP_0969"/>
<dbReference type="EnsemblBacteria" id="AAK75090">
    <property type="protein sequence ID" value="AAK75090"/>
    <property type="gene ID" value="SP_0969"/>
</dbReference>
<dbReference type="GeneID" id="45653689"/>
<dbReference type="KEGG" id="spn:SP_0969"/>
<dbReference type="eggNOG" id="COG1159">
    <property type="taxonomic scope" value="Bacteria"/>
</dbReference>
<dbReference type="PhylomeDB" id="P0A3C3"/>
<dbReference type="BioCyc" id="SPNE170187:G1FZB-997-MONOMER"/>
<dbReference type="Proteomes" id="UP000000585">
    <property type="component" value="Chromosome"/>
</dbReference>
<dbReference type="GO" id="GO:0005829">
    <property type="term" value="C:cytosol"/>
    <property type="evidence" value="ECO:0007669"/>
    <property type="project" value="TreeGrafter"/>
</dbReference>
<dbReference type="GO" id="GO:0005886">
    <property type="term" value="C:plasma membrane"/>
    <property type="evidence" value="ECO:0007669"/>
    <property type="project" value="UniProtKB-SubCell"/>
</dbReference>
<dbReference type="GO" id="GO:0005525">
    <property type="term" value="F:GTP binding"/>
    <property type="evidence" value="ECO:0007669"/>
    <property type="project" value="UniProtKB-UniRule"/>
</dbReference>
<dbReference type="GO" id="GO:0003924">
    <property type="term" value="F:GTPase activity"/>
    <property type="evidence" value="ECO:0007669"/>
    <property type="project" value="UniProtKB-UniRule"/>
</dbReference>
<dbReference type="GO" id="GO:0043024">
    <property type="term" value="F:ribosomal small subunit binding"/>
    <property type="evidence" value="ECO:0007669"/>
    <property type="project" value="TreeGrafter"/>
</dbReference>
<dbReference type="GO" id="GO:0070181">
    <property type="term" value="F:small ribosomal subunit rRNA binding"/>
    <property type="evidence" value="ECO:0007669"/>
    <property type="project" value="UniProtKB-UniRule"/>
</dbReference>
<dbReference type="GO" id="GO:0000028">
    <property type="term" value="P:ribosomal small subunit assembly"/>
    <property type="evidence" value="ECO:0007669"/>
    <property type="project" value="TreeGrafter"/>
</dbReference>
<dbReference type="CDD" id="cd04163">
    <property type="entry name" value="Era"/>
    <property type="match status" value="1"/>
</dbReference>
<dbReference type="CDD" id="cd22534">
    <property type="entry name" value="KH-II_Era"/>
    <property type="match status" value="1"/>
</dbReference>
<dbReference type="FunFam" id="3.30.300.20:FF:000003">
    <property type="entry name" value="GTPase Era"/>
    <property type="match status" value="1"/>
</dbReference>
<dbReference type="FunFam" id="3.40.50.300:FF:000094">
    <property type="entry name" value="GTPase Era"/>
    <property type="match status" value="1"/>
</dbReference>
<dbReference type="Gene3D" id="3.30.300.20">
    <property type="match status" value="1"/>
</dbReference>
<dbReference type="Gene3D" id="3.40.50.300">
    <property type="entry name" value="P-loop containing nucleotide triphosphate hydrolases"/>
    <property type="match status" value="1"/>
</dbReference>
<dbReference type="HAMAP" id="MF_00367">
    <property type="entry name" value="GTPase_Era"/>
    <property type="match status" value="1"/>
</dbReference>
<dbReference type="InterPro" id="IPR030388">
    <property type="entry name" value="G_ERA_dom"/>
</dbReference>
<dbReference type="InterPro" id="IPR006073">
    <property type="entry name" value="GTP-bd"/>
</dbReference>
<dbReference type="InterPro" id="IPR005662">
    <property type="entry name" value="GTPase_Era-like"/>
</dbReference>
<dbReference type="InterPro" id="IPR015946">
    <property type="entry name" value="KH_dom-like_a/b"/>
</dbReference>
<dbReference type="InterPro" id="IPR004044">
    <property type="entry name" value="KH_dom_type_2"/>
</dbReference>
<dbReference type="InterPro" id="IPR009019">
    <property type="entry name" value="KH_sf_prok-type"/>
</dbReference>
<dbReference type="InterPro" id="IPR027417">
    <property type="entry name" value="P-loop_NTPase"/>
</dbReference>
<dbReference type="InterPro" id="IPR005225">
    <property type="entry name" value="Small_GTP-bd"/>
</dbReference>
<dbReference type="NCBIfam" id="TIGR00436">
    <property type="entry name" value="era"/>
    <property type="match status" value="1"/>
</dbReference>
<dbReference type="NCBIfam" id="NF000908">
    <property type="entry name" value="PRK00089.1"/>
    <property type="match status" value="1"/>
</dbReference>
<dbReference type="NCBIfam" id="TIGR00231">
    <property type="entry name" value="small_GTP"/>
    <property type="match status" value="1"/>
</dbReference>
<dbReference type="PANTHER" id="PTHR42698">
    <property type="entry name" value="GTPASE ERA"/>
    <property type="match status" value="1"/>
</dbReference>
<dbReference type="PANTHER" id="PTHR42698:SF1">
    <property type="entry name" value="GTPASE ERA, MITOCHONDRIAL"/>
    <property type="match status" value="1"/>
</dbReference>
<dbReference type="Pfam" id="PF07650">
    <property type="entry name" value="KH_2"/>
    <property type="match status" value="1"/>
</dbReference>
<dbReference type="Pfam" id="PF01926">
    <property type="entry name" value="MMR_HSR1"/>
    <property type="match status" value="1"/>
</dbReference>
<dbReference type="SUPFAM" id="SSF52540">
    <property type="entry name" value="P-loop containing nucleoside triphosphate hydrolases"/>
    <property type="match status" value="1"/>
</dbReference>
<dbReference type="SUPFAM" id="SSF54814">
    <property type="entry name" value="Prokaryotic type KH domain (KH-domain type II)"/>
    <property type="match status" value="1"/>
</dbReference>
<dbReference type="PROSITE" id="PS51713">
    <property type="entry name" value="G_ERA"/>
    <property type="match status" value="1"/>
</dbReference>
<dbReference type="PROSITE" id="PS50823">
    <property type="entry name" value="KH_TYPE_2"/>
    <property type="match status" value="1"/>
</dbReference>
<feature type="chain" id="PRO_0000180058" description="GTPase Era">
    <location>
        <begin position="1"/>
        <end position="299"/>
    </location>
</feature>
<feature type="domain" description="Era-type G" evidence="2">
    <location>
        <begin position="4"/>
        <end position="171"/>
    </location>
</feature>
<feature type="domain" description="KH type-2" evidence="1">
    <location>
        <begin position="202"/>
        <end position="280"/>
    </location>
</feature>
<feature type="region of interest" description="G1" evidence="2">
    <location>
        <begin position="12"/>
        <end position="19"/>
    </location>
</feature>
<feature type="region of interest" description="G2" evidence="2">
    <location>
        <begin position="38"/>
        <end position="42"/>
    </location>
</feature>
<feature type="region of interest" description="G3" evidence="2">
    <location>
        <begin position="59"/>
        <end position="62"/>
    </location>
</feature>
<feature type="region of interest" description="G4" evidence="2">
    <location>
        <begin position="121"/>
        <end position="124"/>
    </location>
</feature>
<feature type="region of interest" description="G5" evidence="2">
    <location>
        <begin position="150"/>
        <end position="152"/>
    </location>
</feature>
<feature type="binding site" evidence="1">
    <location>
        <begin position="12"/>
        <end position="19"/>
    </location>
    <ligand>
        <name>GTP</name>
        <dbReference type="ChEBI" id="CHEBI:37565"/>
    </ligand>
</feature>
<feature type="binding site" evidence="1">
    <location>
        <begin position="59"/>
        <end position="63"/>
    </location>
    <ligand>
        <name>GTP</name>
        <dbReference type="ChEBI" id="CHEBI:37565"/>
    </ligand>
</feature>
<feature type="binding site" evidence="1">
    <location>
        <begin position="121"/>
        <end position="124"/>
    </location>
    <ligand>
        <name>GTP</name>
        <dbReference type="ChEBI" id="CHEBI:37565"/>
    </ligand>
</feature>
<keyword id="KW-1003">Cell membrane</keyword>
<keyword id="KW-0963">Cytoplasm</keyword>
<keyword id="KW-0342">GTP-binding</keyword>
<keyword id="KW-0472">Membrane</keyword>
<keyword id="KW-0547">Nucleotide-binding</keyword>
<keyword id="KW-1185">Reference proteome</keyword>
<keyword id="KW-0690">Ribosome biogenesis</keyword>
<keyword id="KW-0694">RNA-binding</keyword>
<keyword id="KW-0699">rRNA-binding</keyword>
<gene>
    <name evidence="1" type="primary">era</name>
    <name type="ordered locus">SP_0969</name>
</gene>
<accession>P0A3C3</accession>
<accession>Q9XDG9</accession>
<reference key="1">
    <citation type="journal article" date="2001" name="Science">
        <title>Complete genome sequence of a virulent isolate of Streptococcus pneumoniae.</title>
        <authorList>
            <person name="Tettelin H."/>
            <person name="Nelson K.E."/>
            <person name="Paulsen I.T."/>
            <person name="Eisen J.A."/>
            <person name="Read T.D."/>
            <person name="Peterson S.N."/>
            <person name="Heidelberg J.F."/>
            <person name="DeBoy R.T."/>
            <person name="Haft D.H."/>
            <person name="Dodson R.J."/>
            <person name="Durkin A.S."/>
            <person name="Gwinn M.L."/>
            <person name="Kolonay J.F."/>
            <person name="Nelson W.C."/>
            <person name="Peterson J.D."/>
            <person name="Umayam L.A."/>
            <person name="White O."/>
            <person name="Salzberg S.L."/>
            <person name="Lewis M.R."/>
            <person name="Radune D."/>
            <person name="Holtzapple E.K."/>
            <person name="Khouri H.M."/>
            <person name="Wolf A.M."/>
            <person name="Utterback T.R."/>
            <person name="Hansen C.L."/>
            <person name="McDonald L.A."/>
            <person name="Feldblyum T.V."/>
            <person name="Angiuoli S.V."/>
            <person name="Dickinson T."/>
            <person name="Hickey E.K."/>
            <person name="Holt I.E."/>
            <person name="Loftus B.J."/>
            <person name="Yang F."/>
            <person name="Smith H.O."/>
            <person name="Venter J.C."/>
            <person name="Dougherty B.A."/>
            <person name="Morrison D.A."/>
            <person name="Hollingshead S.K."/>
            <person name="Fraser C.M."/>
        </authorList>
    </citation>
    <scope>NUCLEOTIDE SEQUENCE [LARGE SCALE GENOMIC DNA]</scope>
    <source>
        <strain>ATCC BAA-334 / TIGR4</strain>
    </source>
</reference>
<protein>
    <recommendedName>
        <fullName evidence="1">GTPase Era</fullName>
    </recommendedName>
</protein>
<name>ERA_STRPN</name>
<organism>
    <name type="scientific">Streptococcus pneumoniae serotype 4 (strain ATCC BAA-334 / TIGR4)</name>
    <dbReference type="NCBI Taxonomy" id="170187"/>
    <lineage>
        <taxon>Bacteria</taxon>
        <taxon>Bacillati</taxon>
        <taxon>Bacillota</taxon>
        <taxon>Bacilli</taxon>
        <taxon>Lactobacillales</taxon>
        <taxon>Streptococcaceae</taxon>
        <taxon>Streptococcus</taxon>
    </lineage>
</organism>
<comment type="function">
    <text evidence="1">An essential GTPase that binds both GDP and GTP, with rapid nucleotide exchange. Plays a role in 16S rRNA processing and 30S ribosomal subunit biogenesis and possibly also in cell cycle regulation and energy metabolism.</text>
</comment>
<comment type="subunit">
    <text evidence="1">Monomer.</text>
</comment>
<comment type="subcellular location">
    <subcellularLocation>
        <location>Cytoplasm</location>
    </subcellularLocation>
    <subcellularLocation>
        <location evidence="1">Cell membrane</location>
        <topology evidence="1">Peripheral membrane protein</topology>
    </subcellularLocation>
</comment>
<comment type="similarity">
    <text evidence="1 2">Belongs to the TRAFAC class TrmE-Era-EngA-EngB-Septin-like GTPase superfamily. Era GTPase family.</text>
</comment>